<name>C4AC2_DROME</name>
<evidence type="ECO:0000250" key="1"/>
<evidence type="ECO:0000305" key="2"/>
<comment type="function">
    <text evidence="1">May be involved in the metabolism of insect hormones and in the breakdown of synthetic insecticides.</text>
</comment>
<comment type="cofactor">
    <cofactor evidence="1">
        <name>heme</name>
        <dbReference type="ChEBI" id="CHEBI:30413"/>
    </cofactor>
</comment>
<comment type="subcellular location">
    <subcellularLocation>
        <location evidence="2">Endoplasmic reticulum membrane</location>
        <topology evidence="2">Peripheral membrane protein</topology>
    </subcellularLocation>
    <subcellularLocation>
        <location evidence="2">Microsome membrane</location>
        <topology evidence="2">Peripheral membrane protein</topology>
    </subcellularLocation>
</comment>
<comment type="similarity">
    <text evidence="2">Belongs to the cytochrome P450 family.</text>
</comment>
<comment type="sequence caution" evidence="2">
    <conflict type="erroneous initiation">
        <sequence resource="EMBL-CDS" id="AAY55501"/>
    </conflict>
    <text>Extended N-terminus.</text>
</comment>
<proteinExistence type="evidence at transcript level"/>
<sequence>MFLEVLFAAPLVIFIFRKLWAHLNRTYFILSLCKRIRTEDGSLLESKIYVAPSKTRFGNNFDLVNFTSESIFNFMRDASAKAKGRNYLWYFFHAPMYNIVRAEEAEEILQSSKLITKNMIYELLKPFLGEGLLISTDQKWHSRRKALTPAFHFKVLQSFLIIFKEECNKLVKVLHQSVNMELELNQVIPQFTLNNVCETALGVKLDDLSEGIRYRQSIHAIEEVMQQRLCNPFFYNIVYFFLFGDYRKQVNNLKIAHEFSSNIIEKRRSLFKSNQLGQEDEFGKKQRYAMLDTLLAAEADGQIDHQGICDEVNTFMFEGYDTTSTCLIFTLLMLALHEDVQKKCYEEIKYLPDDSDDISVFQFNELVYMECVIKESLRLFPSVPFIGRRCVEEGVVNGLIMPKNTQINIHLYEIMRDARHFSNPKMFQPDRFFPENTVNRHPFAFVPFSAGQRNCIGQKFAILEIKVLLAAVIRNFKILPVTLLDDLTFENGIVLRTKQNIKVKLVHRENK</sequence>
<reference key="1">
    <citation type="journal article" date="2000" name="Science">
        <title>The genome sequence of Drosophila melanogaster.</title>
        <authorList>
            <person name="Adams M.D."/>
            <person name="Celniker S.E."/>
            <person name="Holt R.A."/>
            <person name="Evans C.A."/>
            <person name="Gocayne J.D."/>
            <person name="Amanatides P.G."/>
            <person name="Scherer S.E."/>
            <person name="Li P.W."/>
            <person name="Hoskins R.A."/>
            <person name="Galle R.F."/>
            <person name="George R.A."/>
            <person name="Lewis S.E."/>
            <person name="Richards S."/>
            <person name="Ashburner M."/>
            <person name="Henderson S.N."/>
            <person name="Sutton G.G."/>
            <person name="Wortman J.R."/>
            <person name="Yandell M.D."/>
            <person name="Zhang Q."/>
            <person name="Chen L.X."/>
            <person name="Brandon R.C."/>
            <person name="Rogers Y.-H.C."/>
            <person name="Blazej R.G."/>
            <person name="Champe M."/>
            <person name="Pfeiffer B.D."/>
            <person name="Wan K.H."/>
            <person name="Doyle C."/>
            <person name="Baxter E.G."/>
            <person name="Helt G."/>
            <person name="Nelson C.R."/>
            <person name="Miklos G.L.G."/>
            <person name="Abril J.F."/>
            <person name="Agbayani A."/>
            <person name="An H.-J."/>
            <person name="Andrews-Pfannkoch C."/>
            <person name="Baldwin D."/>
            <person name="Ballew R.M."/>
            <person name="Basu A."/>
            <person name="Baxendale J."/>
            <person name="Bayraktaroglu L."/>
            <person name="Beasley E.M."/>
            <person name="Beeson K.Y."/>
            <person name="Benos P.V."/>
            <person name="Berman B.P."/>
            <person name="Bhandari D."/>
            <person name="Bolshakov S."/>
            <person name="Borkova D."/>
            <person name="Botchan M.R."/>
            <person name="Bouck J."/>
            <person name="Brokstein P."/>
            <person name="Brottier P."/>
            <person name="Burtis K.C."/>
            <person name="Busam D.A."/>
            <person name="Butler H."/>
            <person name="Cadieu E."/>
            <person name="Center A."/>
            <person name="Chandra I."/>
            <person name="Cherry J.M."/>
            <person name="Cawley S."/>
            <person name="Dahlke C."/>
            <person name="Davenport L.B."/>
            <person name="Davies P."/>
            <person name="de Pablos B."/>
            <person name="Delcher A."/>
            <person name="Deng Z."/>
            <person name="Mays A.D."/>
            <person name="Dew I."/>
            <person name="Dietz S.M."/>
            <person name="Dodson K."/>
            <person name="Doup L.E."/>
            <person name="Downes M."/>
            <person name="Dugan-Rocha S."/>
            <person name="Dunkov B.C."/>
            <person name="Dunn P."/>
            <person name="Durbin K.J."/>
            <person name="Evangelista C.C."/>
            <person name="Ferraz C."/>
            <person name="Ferriera S."/>
            <person name="Fleischmann W."/>
            <person name="Fosler C."/>
            <person name="Gabrielian A.E."/>
            <person name="Garg N.S."/>
            <person name="Gelbart W.M."/>
            <person name="Glasser K."/>
            <person name="Glodek A."/>
            <person name="Gong F."/>
            <person name="Gorrell J.H."/>
            <person name="Gu Z."/>
            <person name="Guan P."/>
            <person name="Harris M."/>
            <person name="Harris N.L."/>
            <person name="Harvey D.A."/>
            <person name="Heiman T.J."/>
            <person name="Hernandez J.R."/>
            <person name="Houck J."/>
            <person name="Hostin D."/>
            <person name="Houston K.A."/>
            <person name="Howland T.J."/>
            <person name="Wei M.-H."/>
            <person name="Ibegwam C."/>
            <person name="Jalali M."/>
            <person name="Kalush F."/>
            <person name="Karpen G.H."/>
            <person name="Ke Z."/>
            <person name="Kennison J.A."/>
            <person name="Ketchum K.A."/>
            <person name="Kimmel B.E."/>
            <person name="Kodira C.D."/>
            <person name="Kraft C.L."/>
            <person name="Kravitz S."/>
            <person name="Kulp D."/>
            <person name="Lai Z."/>
            <person name="Lasko P."/>
            <person name="Lei Y."/>
            <person name="Levitsky A.A."/>
            <person name="Li J.H."/>
            <person name="Li Z."/>
            <person name="Liang Y."/>
            <person name="Lin X."/>
            <person name="Liu X."/>
            <person name="Mattei B."/>
            <person name="McIntosh T.C."/>
            <person name="McLeod M.P."/>
            <person name="McPherson D."/>
            <person name="Merkulov G."/>
            <person name="Milshina N.V."/>
            <person name="Mobarry C."/>
            <person name="Morris J."/>
            <person name="Moshrefi A."/>
            <person name="Mount S.M."/>
            <person name="Moy M."/>
            <person name="Murphy B."/>
            <person name="Murphy L."/>
            <person name="Muzny D.M."/>
            <person name="Nelson D.L."/>
            <person name="Nelson D.R."/>
            <person name="Nelson K.A."/>
            <person name="Nixon K."/>
            <person name="Nusskern D.R."/>
            <person name="Pacleb J.M."/>
            <person name="Palazzolo M."/>
            <person name="Pittman G.S."/>
            <person name="Pan S."/>
            <person name="Pollard J."/>
            <person name="Puri V."/>
            <person name="Reese M.G."/>
            <person name="Reinert K."/>
            <person name="Remington K."/>
            <person name="Saunders R.D.C."/>
            <person name="Scheeler F."/>
            <person name="Shen H."/>
            <person name="Shue B.C."/>
            <person name="Siden-Kiamos I."/>
            <person name="Simpson M."/>
            <person name="Skupski M.P."/>
            <person name="Smith T.J."/>
            <person name="Spier E."/>
            <person name="Spradling A.C."/>
            <person name="Stapleton M."/>
            <person name="Strong R."/>
            <person name="Sun E."/>
            <person name="Svirskas R."/>
            <person name="Tector C."/>
            <person name="Turner R."/>
            <person name="Venter E."/>
            <person name="Wang A.H."/>
            <person name="Wang X."/>
            <person name="Wang Z.-Y."/>
            <person name="Wassarman D.A."/>
            <person name="Weinstock G.M."/>
            <person name="Weissenbach J."/>
            <person name="Williams S.M."/>
            <person name="Woodage T."/>
            <person name="Worley K.C."/>
            <person name="Wu D."/>
            <person name="Yang S."/>
            <person name="Yao Q.A."/>
            <person name="Ye J."/>
            <person name="Yeh R.-F."/>
            <person name="Zaveri J.S."/>
            <person name="Zhan M."/>
            <person name="Zhang G."/>
            <person name="Zhao Q."/>
            <person name="Zheng L."/>
            <person name="Zheng X.H."/>
            <person name="Zhong F.N."/>
            <person name="Zhong W."/>
            <person name="Zhou X."/>
            <person name="Zhu S.C."/>
            <person name="Zhu X."/>
            <person name="Smith H.O."/>
            <person name="Gibbs R.A."/>
            <person name="Myers E.W."/>
            <person name="Rubin G.M."/>
            <person name="Venter J.C."/>
        </authorList>
    </citation>
    <scope>NUCLEOTIDE SEQUENCE [LARGE SCALE GENOMIC DNA]</scope>
    <source>
        <strain>Berkeley</strain>
    </source>
</reference>
<reference key="2">
    <citation type="journal article" date="2002" name="Genome Biol.">
        <title>Annotation of the Drosophila melanogaster euchromatic genome: a systematic review.</title>
        <authorList>
            <person name="Misra S."/>
            <person name="Crosby M.A."/>
            <person name="Mungall C.J."/>
            <person name="Matthews B.B."/>
            <person name="Campbell K.S."/>
            <person name="Hradecky P."/>
            <person name="Huang Y."/>
            <person name="Kaminker J.S."/>
            <person name="Millburn G.H."/>
            <person name="Prochnik S.E."/>
            <person name="Smith C.D."/>
            <person name="Tupy J.L."/>
            <person name="Whitfield E.J."/>
            <person name="Bayraktaroglu L."/>
            <person name="Berman B.P."/>
            <person name="Bettencourt B.R."/>
            <person name="Celniker S.E."/>
            <person name="de Grey A.D.N.J."/>
            <person name="Drysdale R.A."/>
            <person name="Harris N.L."/>
            <person name="Richter J."/>
            <person name="Russo S."/>
            <person name="Schroeder A.J."/>
            <person name="Shu S.Q."/>
            <person name="Stapleton M."/>
            <person name="Yamada C."/>
            <person name="Ashburner M."/>
            <person name="Gelbart W.M."/>
            <person name="Rubin G.M."/>
            <person name="Lewis S.E."/>
        </authorList>
    </citation>
    <scope>GENOME REANNOTATION</scope>
    <source>
        <strain>Berkeley</strain>
    </source>
</reference>
<reference key="3">
    <citation type="submission" date="2005-05" db="EMBL/GenBank/DDBJ databases">
        <authorList>
            <person name="Stapleton M."/>
            <person name="Carlson J."/>
            <person name="Chavez C."/>
            <person name="Frise E."/>
            <person name="George R."/>
            <person name="Pacleb J."/>
            <person name="Park S."/>
            <person name="Wan K."/>
            <person name="Yu C."/>
            <person name="Celniker S."/>
        </authorList>
    </citation>
    <scope>NUCLEOTIDE SEQUENCE [LARGE SCALE MRNA]</scope>
    <source>
        <strain>Berkeley</strain>
    </source>
</reference>
<feature type="chain" id="PRO_0000051827" description="Probable cytochrome P450 4ac2">
    <location>
        <begin position="1"/>
        <end position="511"/>
    </location>
</feature>
<feature type="binding site" description="covalent" evidence="1">
    <location>
        <position position="318"/>
    </location>
    <ligand>
        <name>heme</name>
        <dbReference type="ChEBI" id="CHEBI:30413"/>
    </ligand>
</feature>
<feature type="binding site" description="axial binding residue" evidence="1">
    <location>
        <position position="455"/>
    </location>
    <ligand>
        <name>heme</name>
        <dbReference type="ChEBI" id="CHEBI:30413"/>
    </ligand>
    <ligandPart>
        <name>Fe</name>
        <dbReference type="ChEBI" id="CHEBI:18248"/>
    </ligandPart>
</feature>
<accession>Q9VMS8</accession>
<accession>Q4V4C1</accession>
<keyword id="KW-0256">Endoplasmic reticulum</keyword>
<keyword id="KW-0349">Heme</keyword>
<keyword id="KW-0408">Iron</keyword>
<keyword id="KW-0472">Membrane</keyword>
<keyword id="KW-0479">Metal-binding</keyword>
<keyword id="KW-0492">Microsome</keyword>
<keyword id="KW-0503">Monooxygenase</keyword>
<keyword id="KW-0560">Oxidoreductase</keyword>
<keyword id="KW-1185">Reference proteome</keyword>
<gene>
    <name type="primary">Cyp4ac2</name>
    <name type="ORF">CG17970</name>
</gene>
<dbReference type="EC" id="1.14.-.-"/>
<dbReference type="EMBL" id="AE014134">
    <property type="protein sequence ID" value="AAF52233.4"/>
    <property type="molecule type" value="Genomic_DNA"/>
</dbReference>
<dbReference type="EMBL" id="BT023085">
    <property type="protein sequence ID" value="AAY55501.1"/>
    <property type="status" value="ALT_INIT"/>
    <property type="molecule type" value="mRNA"/>
</dbReference>
<dbReference type="RefSeq" id="NP_608917.3">
    <property type="nucleotide sequence ID" value="NM_135073.3"/>
</dbReference>
<dbReference type="SMR" id="Q9VMS8"/>
<dbReference type="FunCoup" id="Q9VMS8">
    <property type="interactions" value="5"/>
</dbReference>
<dbReference type="STRING" id="7227.FBpp0289683"/>
<dbReference type="PaxDb" id="7227-FBpp0289683"/>
<dbReference type="DNASU" id="33755"/>
<dbReference type="EnsemblMetazoa" id="FBtr0300456">
    <property type="protein sequence ID" value="FBpp0289683"/>
    <property type="gene ID" value="FBgn0031694"/>
</dbReference>
<dbReference type="GeneID" id="33755"/>
<dbReference type="KEGG" id="dme:Dmel_CG17970"/>
<dbReference type="UCSC" id="CG17970-RB">
    <property type="organism name" value="d. melanogaster"/>
</dbReference>
<dbReference type="AGR" id="FB:FBgn0031694"/>
<dbReference type="CTD" id="33755"/>
<dbReference type="FlyBase" id="FBgn0031694">
    <property type="gene designation" value="Cyp4ac2"/>
</dbReference>
<dbReference type="VEuPathDB" id="VectorBase:FBgn0031694"/>
<dbReference type="eggNOG" id="KOG0157">
    <property type="taxonomic scope" value="Eukaryota"/>
</dbReference>
<dbReference type="GeneTree" id="ENSGT00940000167779"/>
<dbReference type="HOGENOM" id="CLU_001570_5_1_1"/>
<dbReference type="InParanoid" id="Q9VMS8"/>
<dbReference type="OMA" id="ELVYMEC"/>
<dbReference type="OrthoDB" id="1470350at2759"/>
<dbReference type="PhylomeDB" id="Q9VMS8"/>
<dbReference type="Reactome" id="R-DME-193144">
    <property type="pathway name" value="Estrogen biosynthesis"/>
</dbReference>
<dbReference type="Reactome" id="R-DME-211976">
    <property type="pathway name" value="Endogenous sterols"/>
</dbReference>
<dbReference type="BioGRID-ORCS" id="33755">
    <property type="hits" value="0 hits in 3 CRISPR screens"/>
</dbReference>
<dbReference type="GenomeRNAi" id="33755"/>
<dbReference type="PRO" id="PR:Q9VMS8"/>
<dbReference type="Proteomes" id="UP000000803">
    <property type="component" value="Chromosome 2L"/>
</dbReference>
<dbReference type="Bgee" id="FBgn0031694">
    <property type="expression patterns" value="Expressed in peripheral glial cell (Drosophila) in imaginal disc-derived wing and 31 other cell types or tissues"/>
</dbReference>
<dbReference type="GO" id="GO:0005789">
    <property type="term" value="C:endoplasmic reticulum membrane"/>
    <property type="evidence" value="ECO:0007669"/>
    <property type="project" value="UniProtKB-SubCell"/>
</dbReference>
<dbReference type="GO" id="GO:0020037">
    <property type="term" value="F:heme binding"/>
    <property type="evidence" value="ECO:0007669"/>
    <property type="project" value="InterPro"/>
</dbReference>
<dbReference type="GO" id="GO:0005506">
    <property type="term" value="F:iron ion binding"/>
    <property type="evidence" value="ECO:0007669"/>
    <property type="project" value="InterPro"/>
</dbReference>
<dbReference type="GO" id="GO:0004497">
    <property type="term" value="F:monooxygenase activity"/>
    <property type="evidence" value="ECO:0007669"/>
    <property type="project" value="UniProtKB-KW"/>
</dbReference>
<dbReference type="GO" id="GO:0016705">
    <property type="term" value="F:oxidoreductase activity, acting on paired donors, with incorporation or reduction of molecular oxygen"/>
    <property type="evidence" value="ECO:0007669"/>
    <property type="project" value="InterPro"/>
</dbReference>
<dbReference type="CDD" id="cd20628">
    <property type="entry name" value="CYP4"/>
    <property type="match status" value="1"/>
</dbReference>
<dbReference type="Gene3D" id="1.10.630.10">
    <property type="entry name" value="Cytochrome P450"/>
    <property type="match status" value="1"/>
</dbReference>
<dbReference type="InterPro" id="IPR001128">
    <property type="entry name" value="Cyt_P450"/>
</dbReference>
<dbReference type="InterPro" id="IPR017972">
    <property type="entry name" value="Cyt_P450_CS"/>
</dbReference>
<dbReference type="InterPro" id="IPR002401">
    <property type="entry name" value="Cyt_P450_E_grp-I"/>
</dbReference>
<dbReference type="InterPro" id="IPR036396">
    <property type="entry name" value="Cyt_P450_sf"/>
</dbReference>
<dbReference type="InterPro" id="IPR050196">
    <property type="entry name" value="Cytochrome_P450_Monoox"/>
</dbReference>
<dbReference type="PANTHER" id="PTHR24291:SF105">
    <property type="entry name" value="CYTOCHROME P450 4P1-RELATED"/>
    <property type="match status" value="1"/>
</dbReference>
<dbReference type="PANTHER" id="PTHR24291">
    <property type="entry name" value="CYTOCHROME P450 FAMILY 4"/>
    <property type="match status" value="1"/>
</dbReference>
<dbReference type="Pfam" id="PF00067">
    <property type="entry name" value="p450"/>
    <property type="match status" value="1"/>
</dbReference>
<dbReference type="PRINTS" id="PR00463">
    <property type="entry name" value="EP450I"/>
</dbReference>
<dbReference type="PRINTS" id="PR00385">
    <property type="entry name" value="P450"/>
</dbReference>
<dbReference type="SUPFAM" id="SSF48264">
    <property type="entry name" value="Cytochrome P450"/>
    <property type="match status" value="1"/>
</dbReference>
<dbReference type="PROSITE" id="PS00086">
    <property type="entry name" value="CYTOCHROME_P450"/>
    <property type="match status" value="1"/>
</dbReference>
<protein>
    <recommendedName>
        <fullName>Probable cytochrome P450 4ac2</fullName>
        <ecNumber>1.14.-.-</ecNumber>
    </recommendedName>
    <alternativeName>
        <fullName>CYPIVAC2</fullName>
    </alternativeName>
</protein>
<organism>
    <name type="scientific">Drosophila melanogaster</name>
    <name type="common">Fruit fly</name>
    <dbReference type="NCBI Taxonomy" id="7227"/>
    <lineage>
        <taxon>Eukaryota</taxon>
        <taxon>Metazoa</taxon>
        <taxon>Ecdysozoa</taxon>
        <taxon>Arthropoda</taxon>
        <taxon>Hexapoda</taxon>
        <taxon>Insecta</taxon>
        <taxon>Pterygota</taxon>
        <taxon>Neoptera</taxon>
        <taxon>Endopterygota</taxon>
        <taxon>Diptera</taxon>
        <taxon>Brachycera</taxon>
        <taxon>Muscomorpha</taxon>
        <taxon>Ephydroidea</taxon>
        <taxon>Drosophilidae</taxon>
        <taxon>Drosophila</taxon>
        <taxon>Sophophora</taxon>
    </lineage>
</organism>